<gene>
    <name type="ordered locus">MIMI_R158</name>
</gene>
<proteinExistence type="predicted"/>
<protein>
    <recommendedName>
        <fullName>Uncharacterized protein R158</fullName>
    </recommendedName>
</protein>
<dbReference type="EMBL" id="AY653733">
    <property type="protein sequence ID" value="AAV50433.1"/>
    <property type="molecule type" value="Genomic_DNA"/>
</dbReference>
<dbReference type="KEGG" id="vg:9924758"/>
<dbReference type="OrthoDB" id="39255at10239"/>
<dbReference type="Proteomes" id="UP000001134">
    <property type="component" value="Genome"/>
</dbReference>
<feature type="chain" id="PRO_0000251107" description="Uncharacterized protein R158">
    <location>
        <begin position="1"/>
        <end position="370"/>
    </location>
</feature>
<reference key="1">
    <citation type="journal article" date="2004" name="Science">
        <title>The 1.2-megabase genome sequence of Mimivirus.</title>
        <authorList>
            <person name="Raoult D."/>
            <person name="Audic S."/>
            <person name="Robert C."/>
            <person name="Abergel C."/>
            <person name="Renesto P."/>
            <person name="Ogata H."/>
            <person name="La Scola B."/>
            <person name="Susan M."/>
            <person name="Claverie J.-M."/>
        </authorList>
    </citation>
    <scope>NUCLEOTIDE SEQUENCE [LARGE SCALE GENOMIC DNA]</scope>
    <source>
        <strain>Rowbotham-Bradford</strain>
    </source>
</reference>
<name>YR158_MIMIV</name>
<organismHost>
    <name type="scientific">Acanthamoeba polyphaga</name>
    <name type="common">Amoeba</name>
    <dbReference type="NCBI Taxonomy" id="5757"/>
</organismHost>
<organism>
    <name type="scientific">Acanthamoeba polyphaga mimivirus</name>
    <name type="common">APMV</name>
    <dbReference type="NCBI Taxonomy" id="212035"/>
    <lineage>
        <taxon>Viruses</taxon>
        <taxon>Varidnaviria</taxon>
        <taxon>Bamfordvirae</taxon>
        <taxon>Nucleocytoviricota</taxon>
        <taxon>Megaviricetes</taxon>
        <taxon>Imitervirales</taxon>
        <taxon>Mimiviridae</taxon>
        <taxon>Megamimivirinae</taxon>
        <taxon>Mimivirus</taxon>
        <taxon>Mimivirus bradfordmassiliense</taxon>
    </lineage>
</organism>
<keyword id="KW-1185">Reference proteome</keyword>
<sequence>MDHQSVVYNVYINQLNLYDCDYQKINMIEKFGPTIIVDQHVIVDTMSSIKTDSYKIDALKILLPMFMNPSLDVLLCVIDVISSDSYKIDAIKTLLQYCLEKPVDINIIEKYICCLGGDSYRLDAIIKLHTRLSTMDYSTVEQIIVLVRSDSYRLDVLKKISHKFEKQDAIKTINLIRSDSYKLDYILFVVDTKFLSLDESISLIDLLESNSYKSTYAEKIINTNSTITFNQIVQLTKDLPDTYRLGIADSFIKQLETFDTDNTDIFCQNLGKLTNYASYNQTVERLKIDKTISDKYKPCELTNTMSTSIFNLPVNSHNPLSINFIGNISPNAGTMVYKSIQENNGITTVTIKYSNGSSNIIMIDNNEKKN</sequence>
<accession>Q5UPM4</accession>